<comment type="function">
    <text evidence="1">The beta subunit is responsible for the synthesis of L-tryptophan from indole and L-serine.</text>
</comment>
<comment type="catalytic activity">
    <reaction evidence="1">
        <text>(1S,2R)-1-C-(indol-3-yl)glycerol 3-phosphate + L-serine = D-glyceraldehyde 3-phosphate + L-tryptophan + H2O</text>
        <dbReference type="Rhea" id="RHEA:10532"/>
        <dbReference type="ChEBI" id="CHEBI:15377"/>
        <dbReference type="ChEBI" id="CHEBI:33384"/>
        <dbReference type="ChEBI" id="CHEBI:57912"/>
        <dbReference type="ChEBI" id="CHEBI:58866"/>
        <dbReference type="ChEBI" id="CHEBI:59776"/>
        <dbReference type="EC" id="4.2.1.20"/>
    </reaction>
</comment>
<comment type="cofactor">
    <cofactor evidence="1">
        <name>pyridoxal 5'-phosphate</name>
        <dbReference type="ChEBI" id="CHEBI:597326"/>
    </cofactor>
</comment>
<comment type="pathway">
    <text evidence="1">Amino-acid biosynthesis; L-tryptophan biosynthesis; L-tryptophan from chorismate: step 5/5.</text>
</comment>
<comment type="subunit">
    <text evidence="1">Tetramer of two alpha and two beta chains.</text>
</comment>
<comment type="similarity">
    <text evidence="1">Belongs to the TrpB family.</text>
</comment>
<proteinExistence type="inferred from homology"/>
<keyword id="KW-0028">Amino-acid biosynthesis</keyword>
<keyword id="KW-0057">Aromatic amino acid biosynthesis</keyword>
<keyword id="KW-0456">Lyase</keyword>
<keyword id="KW-0663">Pyridoxal phosphate</keyword>
<keyword id="KW-0822">Tryptophan biosynthesis</keyword>
<accession>Q5LYI7</accession>
<sequence length="402" mass="43419">MTYQQPDAKGFYGKFGGQFVPETLMTAVIELDKAYREAKEDSSFQAELDDLLKNYVGRETPLYHAKRLTDYIGGAQIYLKREDLNHTGAHKINNALGQVLLAKRMGKKKIIAETGAGQHGVATATAAALFDMDCTIYMGEEDVKRQALNVFRMELLGAKVFSVTDGSRVLKDAVNAALRAWVAGIEDTHYIMGSALGPAPFPEIVRDFQSVIGREAKRQYAEISGGKLPDAVMACIGGGSNAIGMFYPFVNDKSVAMYGAEASGLGLDTEKHAATFAKGRPGILHGALMDVLQDAHGQIMEAFSISAGLDYPGVGPEHCYFNEIGRATYDSITDEEALEGFKLLSCLEGIIPALESSHAIALAQKVAAKMSPDQSLIVCLSGRGDKDVMQVKERFEAEAEGK</sequence>
<organism>
    <name type="scientific">Streptococcus thermophilus (strain CNRZ 1066)</name>
    <dbReference type="NCBI Taxonomy" id="299768"/>
    <lineage>
        <taxon>Bacteria</taxon>
        <taxon>Bacillati</taxon>
        <taxon>Bacillota</taxon>
        <taxon>Bacilli</taxon>
        <taxon>Lactobacillales</taxon>
        <taxon>Streptococcaceae</taxon>
        <taxon>Streptococcus</taxon>
    </lineage>
</organism>
<name>TRPB_STRT1</name>
<protein>
    <recommendedName>
        <fullName evidence="1">Tryptophan synthase beta chain</fullName>
        <ecNumber evidence="1">4.2.1.20</ecNumber>
    </recommendedName>
</protein>
<feature type="chain" id="PRO_1000018410" description="Tryptophan synthase beta chain">
    <location>
        <begin position="1"/>
        <end position="402"/>
    </location>
</feature>
<feature type="modified residue" description="N6-(pyridoxal phosphate)lysine" evidence="1">
    <location>
        <position position="91"/>
    </location>
</feature>
<gene>
    <name evidence="1" type="primary">trpB</name>
    <name type="ordered locus">str1588</name>
</gene>
<reference key="1">
    <citation type="journal article" date="2004" name="Nat. Biotechnol.">
        <title>Complete sequence and comparative genome analysis of the dairy bacterium Streptococcus thermophilus.</title>
        <authorList>
            <person name="Bolotin A."/>
            <person name="Quinquis B."/>
            <person name="Renault P."/>
            <person name="Sorokin A."/>
            <person name="Ehrlich S.D."/>
            <person name="Kulakauskas S."/>
            <person name="Lapidus A."/>
            <person name="Goltsman E."/>
            <person name="Mazur M."/>
            <person name="Pusch G.D."/>
            <person name="Fonstein M."/>
            <person name="Overbeek R."/>
            <person name="Kyprides N."/>
            <person name="Purnelle B."/>
            <person name="Prozzi D."/>
            <person name="Ngui K."/>
            <person name="Masuy D."/>
            <person name="Hancy F."/>
            <person name="Burteau S."/>
            <person name="Boutry M."/>
            <person name="Delcour J."/>
            <person name="Goffeau A."/>
            <person name="Hols P."/>
        </authorList>
    </citation>
    <scope>NUCLEOTIDE SEQUENCE [LARGE SCALE GENOMIC DNA]</scope>
    <source>
        <strain>CNRZ 1066</strain>
    </source>
</reference>
<dbReference type="EC" id="4.2.1.20" evidence="1"/>
<dbReference type="EMBL" id="CP000024">
    <property type="protein sequence ID" value="AAV63118.1"/>
    <property type="molecule type" value="Genomic_DNA"/>
</dbReference>
<dbReference type="RefSeq" id="WP_011227476.1">
    <property type="nucleotide sequence ID" value="NC_006449.1"/>
</dbReference>
<dbReference type="SMR" id="Q5LYI7"/>
<dbReference type="KEGG" id="stc:str1588"/>
<dbReference type="HOGENOM" id="CLU_016734_3_1_9"/>
<dbReference type="UniPathway" id="UPA00035">
    <property type="reaction ID" value="UER00044"/>
</dbReference>
<dbReference type="GO" id="GO:0005737">
    <property type="term" value="C:cytoplasm"/>
    <property type="evidence" value="ECO:0007669"/>
    <property type="project" value="TreeGrafter"/>
</dbReference>
<dbReference type="GO" id="GO:0004834">
    <property type="term" value="F:tryptophan synthase activity"/>
    <property type="evidence" value="ECO:0007669"/>
    <property type="project" value="UniProtKB-UniRule"/>
</dbReference>
<dbReference type="CDD" id="cd06446">
    <property type="entry name" value="Trp-synth_B"/>
    <property type="match status" value="1"/>
</dbReference>
<dbReference type="FunFam" id="3.40.50.1100:FF:000001">
    <property type="entry name" value="Tryptophan synthase beta chain"/>
    <property type="match status" value="1"/>
</dbReference>
<dbReference type="FunFam" id="3.40.50.1100:FF:000004">
    <property type="entry name" value="Tryptophan synthase beta chain"/>
    <property type="match status" value="1"/>
</dbReference>
<dbReference type="Gene3D" id="3.40.50.1100">
    <property type="match status" value="2"/>
</dbReference>
<dbReference type="HAMAP" id="MF_00133">
    <property type="entry name" value="Trp_synth_beta"/>
    <property type="match status" value="1"/>
</dbReference>
<dbReference type="InterPro" id="IPR006653">
    <property type="entry name" value="Trp_synth_b_CS"/>
</dbReference>
<dbReference type="InterPro" id="IPR006654">
    <property type="entry name" value="Trp_synth_beta"/>
</dbReference>
<dbReference type="InterPro" id="IPR023026">
    <property type="entry name" value="Trp_synth_beta/beta-like"/>
</dbReference>
<dbReference type="InterPro" id="IPR001926">
    <property type="entry name" value="TrpB-like_PALP"/>
</dbReference>
<dbReference type="InterPro" id="IPR036052">
    <property type="entry name" value="TrpB-like_PALP_sf"/>
</dbReference>
<dbReference type="NCBIfam" id="TIGR00263">
    <property type="entry name" value="trpB"/>
    <property type="match status" value="1"/>
</dbReference>
<dbReference type="PANTHER" id="PTHR48077:SF3">
    <property type="entry name" value="TRYPTOPHAN SYNTHASE"/>
    <property type="match status" value="1"/>
</dbReference>
<dbReference type="PANTHER" id="PTHR48077">
    <property type="entry name" value="TRYPTOPHAN SYNTHASE-RELATED"/>
    <property type="match status" value="1"/>
</dbReference>
<dbReference type="Pfam" id="PF00291">
    <property type="entry name" value="PALP"/>
    <property type="match status" value="1"/>
</dbReference>
<dbReference type="PIRSF" id="PIRSF001413">
    <property type="entry name" value="Trp_syn_beta"/>
    <property type="match status" value="1"/>
</dbReference>
<dbReference type="SUPFAM" id="SSF53686">
    <property type="entry name" value="Tryptophan synthase beta subunit-like PLP-dependent enzymes"/>
    <property type="match status" value="1"/>
</dbReference>
<dbReference type="PROSITE" id="PS00168">
    <property type="entry name" value="TRP_SYNTHASE_BETA"/>
    <property type="match status" value="1"/>
</dbReference>
<evidence type="ECO:0000255" key="1">
    <source>
        <dbReference type="HAMAP-Rule" id="MF_00133"/>
    </source>
</evidence>